<reference key="1">
    <citation type="journal article" date="1997" name="DNA Res.">
        <title>Sequence analysis of the 36-kb region between gntZ and trnY genes of Bacillus subtilis genome.</title>
        <authorList>
            <person name="Kasahara Y."/>
            <person name="Nakai S."/>
            <person name="Ogasawara N."/>
        </authorList>
    </citation>
    <scope>NUCLEOTIDE SEQUENCE [GENOMIC DNA]</scope>
    <source>
        <strain>168</strain>
    </source>
</reference>
<reference key="2">
    <citation type="journal article" date="1997" name="Nature">
        <title>The complete genome sequence of the Gram-positive bacterium Bacillus subtilis.</title>
        <authorList>
            <person name="Kunst F."/>
            <person name="Ogasawara N."/>
            <person name="Moszer I."/>
            <person name="Albertini A.M."/>
            <person name="Alloni G."/>
            <person name="Azevedo V."/>
            <person name="Bertero M.G."/>
            <person name="Bessieres P."/>
            <person name="Bolotin A."/>
            <person name="Borchert S."/>
            <person name="Borriss R."/>
            <person name="Boursier L."/>
            <person name="Brans A."/>
            <person name="Braun M."/>
            <person name="Brignell S.C."/>
            <person name="Bron S."/>
            <person name="Brouillet S."/>
            <person name="Bruschi C.V."/>
            <person name="Caldwell B."/>
            <person name="Capuano V."/>
            <person name="Carter N.M."/>
            <person name="Choi S.-K."/>
            <person name="Codani J.-J."/>
            <person name="Connerton I.F."/>
            <person name="Cummings N.J."/>
            <person name="Daniel R.A."/>
            <person name="Denizot F."/>
            <person name="Devine K.M."/>
            <person name="Duesterhoeft A."/>
            <person name="Ehrlich S.D."/>
            <person name="Emmerson P.T."/>
            <person name="Entian K.-D."/>
            <person name="Errington J."/>
            <person name="Fabret C."/>
            <person name="Ferrari E."/>
            <person name="Foulger D."/>
            <person name="Fritz C."/>
            <person name="Fujita M."/>
            <person name="Fujita Y."/>
            <person name="Fuma S."/>
            <person name="Galizzi A."/>
            <person name="Galleron N."/>
            <person name="Ghim S.-Y."/>
            <person name="Glaser P."/>
            <person name="Goffeau A."/>
            <person name="Golightly E.J."/>
            <person name="Grandi G."/>
            <person name="Guiseppi G."/>
            <person name="Guy B.J."/>
            <person name="Haga K."/>
            <person name="Haiech J."/>
            <person name="Harwood C.R."/>
            <person name="Henaut A."/>
            <person name="Hilbert H."/>
            <person name="Holsappel S."/>
            <person name="Hosono S."/>
            <person name="Hullo M.-F."/>
            <person name="Itaya M."/>
            <person name="Jones L.-M."/>
            <person name="Joris B."/>
            <person name="Karamata D."/>
            <person name="Kasahara Y."/>
            <person name="Klaerr-Blanchard M."/>
            <person name="Klein C."/>
            <person name="Kobayashi Y."/>
            <person name="Koetter P."/>
            <person name="Koningstein G."/>
            <person name="Krogh S."/>
            <person name="Kumano M."/>
            <person name="Kurita K."/>
            <person name="Lapidus A."/>
            <person name="Lardinois S."/>
            <person name="Lauber J."/>
            <person name="Lazarevic V."/>
            <person name="Lee S.-M."/>
            <person name="Levine A."/>
            <person name="Liu H."/>
            <person name="Masuda S."/>
            <person name="Mauel C."/>
            <person name="Medigue C."/>
            <person name="Medina N."/>
            <person name="Mellado R.P."/>
            <person name="Mizuno M."/>
            <person name="Moestl D."/>
            <person name="Nakai S."/>
            <person name="Noback M."/>
            <person name="Noone D."/>
            <person name="O'Reilly M."/>
            <person name="Ogawa K."/>
            <person name="Ogiwara A."/>
            <person name="Oudega B."/>
            <person name="Park S.-H."/>
            <person name="Parro V."/>
            <person name="Pohl T.M."/>
            <person name="Portetelle D."/>
            <person name="Porwollik S."/>
            <person name="Prescott A.M."/>
            <person name="Presecan E."/>
            <person name="Pujic P."/>
            <person name="Purnelle B."/>
            <person name="Rapoport G."/>
            <person name="Rey M."/>
            <person name="Reynolds S."/>
            <person name="Rieger M."/>
            <person name="Rivolta C."/>
            <person name="Rocha E."/>
            <person name="Roche B."/>
            <person name="Rose M."/>
            <person name="Sadaie Y."/>
            <person name="Sato T."/>
            <person name="Scanlan E."/>
            <person name="Schleich S."/>
            <person name="Schroeter R."/>
            <person name="Scoffone F."/>
            <person name="Sekiguchi J."/>
            <person name="Sekowska A."/>
            <person name="Seror S.J."/>
            <person name="Serror P."/>
            <person name="Shin B.-S."/>
            <person name="Soldo B."/>
            <person name="Sorokin A."/>
            <person name="Tacconi E."/>
            <person name="Takagi T."/>
            <person name="Takahashi H."/>
            <person name="Takemaru K."/>
            <person name="Takeuchi M."/>
            <person name="Tamakoshi A."/>
            <person name="Tanaka T."/>
            <person name="Terpstra P."/>
            <person name="Tognoni A."/>
            <person name="Tosato V."/>
            <person name="Uchiyama S."/>
            <person name="Vandenbol M."/>
            <person name="Vannier F."/>
            <person name="Vassarotti A."/>
            <person name="Viari A."/>
            <person name="Wambutt R."/>
            <person name="Wedler E."/>
            <person name="Wedler H."/>
            <person name="Weitzenegger T."/>
            <person name="Winters P."/>
            <person name="Wipat A."/>
            <person name="Yamamoto H."/>
            <person name="Yamane K."/>
            <person name="Yasumoto K."/>
            <person name="Yata K."/>
            <person name="Yoshida K."/>
            <person name="Yoshikawa H.-F."/>
            <person name="Zumstein E."/>
            <person name="Yoshikawa H."/>
            <person name="Danchin A."/>
        </authorList>
    </citation>
    <scope>NUCLEOTIDE SEQUENCE [LARGE SCALE GENOMIC DNA]</scope>
    <source>
        <strain>168</strain>
    </source>
</reference>
<reference key="3">
    <citation type="journal article" date="2004" name="Mol. Microbiol.">
        <title>Identification of AbrB-regulated genes involved in biofilm formation by Bacillus subtilis.</title>
        <authorList>
            <person name="Hamon M.A."/>
            <person name="Stanley N.R."/>
            <person name="Britton R.A."/>
            <person name="Grossman A.D."/>
            <person name="Lazazzera B.A."/>
        </authorList>
    </citation>
    <scope>INDUCTION</scope>
</reference>
<reference key="4">
    <citation type="journal article" date="2007" name="J. Bacteriol.">
        <title>The yydFGHIJ operon of Bacillus subtilis encodes a peptide that induces the LiaRS two-component system.</title>
        <authorList>
            <person name="Butcher B.G."/>
            <person name="Lin Y.-P."/>
            <person name="Helmann J.D."/>
        </authorList>
    </citation>
    <scope>SUGGESTION OF FUNCTION</scope>
    <scope>INDUCTION</scope>
    <scope>OPERON STRUCTURE</scope>
    <source>
        <strain>168</strain>
    </source>
</reference>
<accession>Q45596</accession>
<accession>Q794W9</accession>
<feature type="chain" id="PRO_0000370197" description="Putative exported peptide YydF">
    <location>
        <begin position="1"/>
        <end position="49"/>
    </location>
</feature>
<feature type="helix" evidence="3">
    <location>
        <begin position="40"/>
        <end position="42"/>
    </location>
</feature>
<organism>
    <name type="scientific">Bacillus subtilis (strain 168)</name>
    <dbReference type="NCBI Taxonomy" id="224308"/>
    <lineage>
        <taxon>Bacteria</taxon>
        <taxon>Bacillati</taxon>
        <taxon>Bacillota</taxon>
        <taxon>Bacilli</taxon>
        <taxon>Bacillales</taxon>
        <taxon>Bacillaceae</taxon>
        <taxon>Bacillus</taxon>
    </lineage>
</organism>
<protein>
    <recommendedName>
        <fullName>Putative exported peptide YydF</fullName>
    </recommendedName>
</protein>
<comment type="function">
    <text>Suggested to be the precursor for an exported, modified peptide that has antimicrobial and/or signaling properties. Synthesis requires YydG and YydH; the peptide is proposed to be exported by the YydIJ transporter. In the absence of the transporter, the modified peptide activates the LiaRS two-component regulatory system, possibly by eliciting cell envelope stress. This activation can occur in trans in cocultured cells lacking either the transporter or the whole operon.</text>
</comment>
<comment type="induction">
    <text evidence="1 2">Repressed by AbrB. Induced in stationary phase in LB (rich) medium; the transcript is present in log phase cells grown in modified competence (MC) and MM media.</text>
</comment>
<gene>
    <name type="primary">yydF</name>
    <name type="ordered locus">BSU40180</name>
</gene>
<keyword id="KW-0002">3D-structure</keyword>
<keyword id="KW-1185">Reference proteome</keyword>
<dbReference type="EMBL" id="D78193">
    <property type="protein sequence ID" value="BAA11276.1"/>
    <property type="molecule type" value="Genomic_DNA"/>
</dbReference>
<dbReference type="EMBL" id="AL009126">
    <property type="protein sequence ID" value="CAB16055.1"/>
    <property type="molecule type" value="Genomic_DNA"/>
</dbReference>
<dbReference type="PIR" id="D70091">
    <property type="entry name" value="D70091"/>
</dbReference>
<dbReference type="RefSeq" id="WP_003226979.1">
    <property type="nucleotide sequence ID" value="NZ_OZ025638.1"/>
</dbReference>
<dbReference type="PDB" id="8AI2">
    <property type="method" value="X-ray"/>
    <property type="resolution" value="2.39 A"/>
    <property type="chains" value="C/D=35-45"/>
</dbReference>
<dbReference type="PDB" id="8AI4">
    <property type="method" value="X-ray"/>
    <property type="resolution" value="1.75 A"/>
    <property type="chains" value="C/D=35-45"/>
</dbReference>
<dbReference type="PDB" id="8AI5">
    <property type="method" value="X-ray"/>
    <property type="resolution" value="2.15 A"/>
    <property type="chains" value="C/D=39-49"/>
</dbReference>
<dbReference type="PDBsum" id="8AI2"/>
<dbReference type="PDBsum" id="8AI4"/>
<dbReference type="PDBsum" id="8AI5"/>
<dbReference type="SMR" id="Q45596"/>
<dbReference type="FunCoup" id="Q45596">
    <property type="interactions" value="36"/>
</dbReference>
<dbReference type="STRING" id="224308.BSU40180"/>
<dbReference type="PaxDb" id="224308-BSU40180"/>
<dbReference type="EnsemblBacteria" id="CAB16055">
    <property type="protein sequence ID" value="CAB16055"/>
    <property type="gene ID" value="BSU_40180"/>
</dbReference>
<dbReference type="GeneID" id="937753"/>
<dbReference type="KEGG" id="bsu:BSU40180"/>
<dbReference type="PATRIC" id="fig|224308.179.peg.4346"/>
<dbReference type="InParanoid" id="Q45596"/>
<dbReference type="OrthoDB" id="2411793at2"/>
<dbReference type="BioCyc" id="BSUB:BSU40180-MONOMER"/>
<dbReference type="Proteomes" id="UP000001570">
    <property type="component" value="Chromosome"/>
</dbReference>
<dbReference type="InterPro" id="IPR023898">
    <property type="entry name" value="YydF-like"/>
</dbReference>
<dbReference type="NCBIfam" id="TIGR04077">
    <property type="entry name" value="expor_sig_YdyF"/>
    <property type="match status" value="1"/>
</dbReference>
<proteinExistence type="evidence at protein level"/>
<evidence type="ECO:0000269" key="1">
    <source>
    </source>
</evidence>
<evidence type="ECO:0000269" key="2">
    <source>
    </source>
</evidence>
<evidence type="ECO:0007829" key="3">
    <source>
        <dbReference type="PDB" id="8AI4"/>
    </source>
</evidence>
<sequence>MKKEITNNETVKNLEFKGLLDESQKLAKVNDLWYFVKSKENRWILGSGH</sequence>
<name>YYDF_BACSU</name>